<keyword id="KW-0106">Calcium</keyword>
<keyword id="KW-0998">Cell outer membrane</keyword>
<keyword id="KW-0378">Hydrolase</keyword>
<keyword id="KW-0442">Lipid degradation</keyword>
<keyword id="KW-0443">Lipid metabolism</keyword>
<keyword id="KW-0472">Membrane</keyword>
<keyword id="KW-0479">Metal-binding</keyword>
<keyword id="KW-1185">Reference proteome</keyword>
<keyword id="KW-0732">Signal</keyword>
<keyword id="KW-0812">Transmembrane</keyword>
<keyword id="KW-1134">Transmembrane beta strand</keyword>
<comment type="function">
    <text evidence="1">Hydrolysis of phosphatidylcholine with phospholipase A2 (EC 3.1.1.4) and phospholipase A1 (EC 3.1.1.32) activities.</text>
</comment>
<comment type="catalytic activity">
    <reaction>
        <text>a 1,2-diacyl-sn-glycero-3-phosphocholine + H2O = a 2-acyl-sn-glycero-3-phosphocholine + a fatty acid + H(+)</text>
        <dbReference type="Rhea" id="RHEA:18689"/>
        <dbReference type="ChEBI" id="CHEBI:15377"/>
        <dbReference type="ChEBI" id="CHEBI:15378"/>
        <dbReference type="ChEBI" id="CHEBI:28868"/>
        <dbReference type="ChEBI" id="CHEBI:57643"/>
        <dbReference type="ChEBI" id="CHEBI:57875"/>
        <dbReference type="EC" id="3.1.1.32"/>
    </reaction>
</comment>
<comment type="catalytic activity">
    <reaction>
        <text>a 1,2-diacyl-sn-glycero-3-phosphocholine + H2O = a 1-acyl-sn-glycero-3-phosphocholine + a fatty acid + H(+)</text>
        <dbReference type="Rhea" id="RHEA:15801"/>
        <dbReference type="ChEBI" id="CHEBI:15377"/>
        <dbReference type="ChEBI" id="CHEBI:15378"/>
        <dbReference type="ChEBI" id="CHEBI:28868"/>
        <dbReference type="ChEBI" id="CHEBI:57643"/>
        <dbReference type="ChEBI" id="CHEBI:58168"/>
        <dbReference type="EC" id="3.1.1.4"/>
    </reaction>
</comment>
<comment type="cofactor">
    <cofactor evidence="1">
        <name>Ca(2+)</name>
        <dbReference type="ChEBI" id="CHEBI:29108"/>
    </cofactor>
    <text evidence="1">Binds 1 Ca(2+) ion per monomer. In the dimeric form the Ca(2+) is bound by different amino acids with binding of each Ca(2+) shared with ligands coming from each monomer. The Ca(2+) ion may have a role in catalysis.</text>
</comment>
<comment type="subunit">
    <text evidence="1">Homodimer; dimerization is reversible, and the dimeric form is the active one.</text>
</comment>
<comment type="subcellular location">
    <subcellularLocation>
        <location evidence="1">Cell outer membrane</location>
        <topology evidence="1">Multi-pass membrane protein</topology>
    </subcellularLocation>
    <text evidence="1">One of the very few enzymes located there.</text>
</comment>
<comment type="similarity">
    <text evidence="2">Belongs to the phospholipase A1 family.</text>
</comment>
<evidence type="ECO:0000250" key="1"/>
<evidence type="ECO:0000305" key="2"/>
<sequence>MRTLQGWLLPVFMLPMAVYAQEATVKEVHDAPAVRGSIIANMLQEHDNPFTLYPYDTNYLIYTQTSDLNKEAIASYDWAENARKDEVKFQLSLAFPLWRGILGPNSVLGASYTQKSWWQLSNSEESSPFRETNYEPQLFLGFATDYRFAGWTLRDVEMGYNHDSNGRSDPTSRSWNRLYTRLMAENGNWLVEVKPWYVVGNTDDNPDITKYMGYYQLKIGYHLGDAVLSAKGQYNWNTGYGGAELGLSYPITKHVRLYTQVYSGYGESLIDYNFNQTRVGVGVMLNDLF</sequence>
<reference key="1">
    <citation type="journal article" date="2002" name="Nucleic Acids Res.">
        <title>Genome sequence of Shigella flexneri 2a: insights into pathogenicity through comparison with genomes of Escherichia coli K12 and O157.</title>
        <authorList>
            <person name="Jin Q."/>
            <person name="Yuan Z."/>
            <person name="Xu J."/>
            <person name="Wang Y."/>
            <person name="Shen Y."/>
            <person name="Lu W."/>
            <person name="Wang J."/>
            <person name="Liu H."/>
            <person name="Yang J."/>
            <person name="Yang F."/>
            <person name="Zhang X."/>
            <person name="Zhang J."/>
            <person name="Yang G."/>
            <person name="Wu H."/>
            <person name="Qu D."/>
            <person name="Dong J."/>
            <person name="Sun L."/>
            <person name="Xue Y."/>
            <person name="Zhao A."/>
            <person name="Gao Y."/>
            <person name="Zhu J."/>
            <person name="Kan B."/>
            <person name="Ding K."/>
            <person name="Chen S."/>
            <person name="Cheng H."/>
            <person name="Yao Z."/>
            <person name="He B."/>
            <person name="Chen R."/>
            <person name="Ma D."/>
            <person name="Qiang B."/>
            <person name="Wen Y."/>
            <person name="Hou Y."/>
            <person name="Yu J."/>
        </authorList>
    </citation>
    <scope>NUCLEOTIDE SEQUENCE [LARGE SCALE GENOMIC DNA]</scope>
    <source>
        <strain>301 / Serotype 2a</strain>
    </source>
</reference>
<reference key="2">
    <citation type="journal article" date="2003" name="Infect. Immun.">
        <title>Complete genome sequence and comparative genomics of Shigella flexneri serotype 2a strain 2457T.</title>
        <authorList>
            <person name="Wei J."/>
            <person name="Goldberg M.B."/>
            <person name="Burland V."/>
            <person name="Venkatesan M.M."/>
            <person name="Deng W."/>
            <person name="Fournier G."/>
            <person name="Mayhew G.F."/>
            <person name="Plunkett G. III"/>
            <person name="Rose D.J."/>
            <person name="Darling A."/>
            <person name="Mau B."/>
            <person name="Perna N.T."/>
            <person name="Payne S.M."/>
            <person name="Runyen-Janecky L.J."/>
            <person name="Zhou S."/>
            <person name="Schwartz D.C."/>
            <person name="Blattner F.R."/>
        </authorList>
    </citation>
    <scope>NUCLEOTIDE SEQUENCE [LARGE SCALE GENOMIC DNA]</scope>
    <source>
        <strain>ATCC 700930 / 2457T / Serotype 2a</strain>
    </source>
</reference>
<gene>
    <name type="primary">pldA</name>
    <name type="ordered locus">SF3899</name>
    <name type="ordered locus">S3856</name>
</gene>
<accession>P0A923</accession>
<accession>P00631</accession>
<feature type="signal peptide" evidence="1">
    <location>
        <begin position="1"/>
        <end position="20"/>
    </location>
</feature>
<feature type="chain" id="PRO_0000021985" description="Phospholipase A1">
    <location>
        <begin position="21"/>
        <end position="289"/>
    </location>
</feature>
<feature type="topological domain" description="Periplasmic" evidence="1">
    <location>
        <begin position="21"/>
        <end position="52"/>
    </location>
</feature>
<feature type="transmembrane region" description="Beta stranded" evidence="1">
    <location>
        <begin position="53"/>
        <end position="65"/>
    </location>
</feature>
<feature type="topological domain" description="Extracellular" evidence="1">
    <location>
        <begin position="66"/>
        <end position="84"/>
    </location>
</feature>
<feature type="transmembrane region" description="Beta stranded" evidence="1">
    <location>
        <begin position="85"/>
        <end position="99"/>
    </location>
</feature>
<feature type="topological domain" description="Periplasmic" evidence="1">
    <location>
        <begin position="100"/>
        <end position="105"/>
    </location>
</feature>
<feature type="transmembrane region" description="Beta stranded" evidence="1">
    <location>
        <begin position="106"/>
        <end position="118"/>
    </location>
</feature>
<feature type="topological domain" description="Extracellular" evidence="1">
    <location>
        <begin position="119"/>
        <end position="128"/>
    </location>
</feature>
<feature type="transmembrane region" description="Beta stranded" evidence="1">
    <location>
        <begin position="129"/>
        <end position="148"/>
    </location>
</feature>
<feature type="topological domain" description="Periplasmic" evidence="1">
    <location>
        <begin position="149"/>
        <end position="150"/>
    </location>
</feature>
<feature type="transmembrane region" description="Beta stranded" evidence="1">
    <location>
        <begin position="151"/>
        <end position="164"/>
    </location>
</feature>
<feature type="topological domain" description="Extracellular" evidence="1">
    <location>
        <begin position="165"/>
        <end position="173"/>
    </location>
</feature>
<feature type="transmembrane region" description="Beta stranded" evidence="1">
    <location>
        <begin position="174"/>
        <end position="186"/>
    </location>
</feature>
<feature type="topological domain" description="Periplasmic" evidence="1">
    <location>
        <begin position="187"/>
        <end position="188"/>
    </location>
</feature>
<feature type="transmembrane region" description="Beta stranded" evidence="1">
    <location>
        <begin position="189"/>
        <end position="198"/>
    </location>
</feature>
<feature type="topological domain" description="Extracellular" evidence="1">
    <location>
        <begin position="199"/>
        <end position="216"/>
    </location>
</feature>
<feature type="transmembrane region" description="Beta stranded" evidence="1">
    <location>
        <begin position="217"/>
        <end position="223"/>
    </location>
</feature>
<feature type="topological domain" description="Periplasmic" evidence="1">
    <location>
        <begin position="224"/>
        <end position="225"/>
    </location>
</feature>
<feature type="transmembrane region" description="Beta stranded" evidence="1">
    <location>
        <begin position="226"/>
        <end position="234"/>
    </location>
</feature>
<feature type="topological domain" description="Extracellular" evidence="1">
    <location>
        <begin position="235"/>
        <end position="241"/>
    </location>
</feature>
<feature type="transmembrane region" description="Beta stranded" evidence="1">
    <location>
        <begin position="242"/>
        <end position="250"/>
    </location>
</feature>
<feature type="topological domain" description="Periplasmic" evidence="1">
    <location>
        <begin position="251"/>
        <end position="255"/>
    </location>
</feature>
<feature type="transmembrane region" description="Beta stranded" evidence="1">
    <location>
        <begin position="256"/>
        <end position="265"/>
    </location>
</feature>
<feature type="topological domain" description="Extracellular" evidence="1">
    <location>
        <begin position="266"/>
        <end position="274"/>
    </location>
</feature>
<feature type="transmembrane region" description="Beta stranded" evidence="1">
    <location>
        <begin position="275"/>
        <end position="286"/>
    </location>
</feature>
<feature type="topological domain" description="Periplasmic" evidence="1">
    <location>
        <begin position="287"/>
        <end position="289"/>
    </location>
</feature>
<feature type="active site" description="Proton acceptor" evidence="1">
    <location>
        <position position="162"/>
    </location>
</feature>
<feature type="active site" description="Nucleophile" evidence="1">
    <location>
        <position position="164"/>
    </location>
</feature>
<feature type="binding site" description="in dimeric form" evidence="1">
    <location>
        <position position="126"/>
    </location>
    <ligand>
        <name>Ca(2+)</name>
        <dbReference type="ChEBI" id="CHEBI:29108"/>
        <label>1</label>
    </ligand>
</feature>
<feature type="binding site" description="in dimeric form" evidence="1">
    <location>
        <position position="167"/>
    </location>
    <ligand>
        <name>Ca(2+)</name>
        <dbReference type="ChEBI" id="CHEBI:29108"/>
        <label>2</label>
    </ligand>
</feature>
<feature type="binding site" description="in dimeric form" evidence="1">
    <location>
        <position position="172"/>
    </location>
    <ligand>
        <name>Ca(2+)</name>
        <dbReference type="ChEBI" id="CHEBI:29108"/>
        <label>2</label>
    </ligand>
</feature>
<feature type="binding site" description="in monomeric form" evidence="1">
    <location>
        <position position="204"/>
    </location>
    <ligand>
        <name>Ca(2+)</name>
        <dbReference type="ChEBI" id="CHEBI:29108"/>
        <label>3</label>
    </ligand>
</feature>
<name>PA1_SHIFL</name>
<organism>
    <name type="scientific">Shigella flexneri</name>
    <dbReference type="NCBI Taxonomy" id="623"/>
    <lineage>
        <taxon>Bacteria</taxon>
        <taxon>Pseudomonadati</taxon>
        <taxon>Pseudomonadota</taxon>
        <taxon>Gammaproteobacteria</taxon>
        <taxon>Enterobacterales</taxon>
        <taxon>Enterobacteriaceae</taxon>
        <taxon>Shigella</taxon>
    </lineage>
</organism>
<proteinExistence type="inferred from homology"/>
<dbReference type="EC" id="3.1.1.32"/>
<dbReference type="EC" id="3.1.1.4"/>
<dbReference type="EMBL" id="AE005674">
    <property type="protein sequence ID" value="AAN45334.1"/>
    <property type="molecule type" value="Genomic_DNA"/>
</dbReference>
<dbReference type="EMBL" id="AE014073">
    <property type="protein sequence ID" value="AAP18864.1"/>
    <property type="molecule type" value="Genomic_DNA"/>
</dbReference>
<dbReference type="RefSeq" id="NP_709627.1">
    <property type="nucleotide sequence ID" value="NC_004337.2"/>
</dbReference>
<dbReference type="RefSeq" id="WP_001259700.1">
    <property type="nucleotide sequence ID" value="NZ_WPGW01000036.1"/>
</dbReference>
<dbReference type="SMR" id="P0A923"/>
<dbReference type="STRING" id="198214.SF3899"/>
<dbReference type="PaxDb" id="198214-SF3899"/>
<dbReference type="GeneID" id="1023494"/>
<dbReference type="GeneID" id="75204815"/>
<dbReference type="KEGG" id="sfl:SF3899"/>
<dbReference type="KEGG" id="sfx:S3856"/>
<dbReference type="PATRIC" id="fig|198214.7.peg.4599"/>
<dbReference type="HOGENOM" id="CLU_045813_1_0_6"/>
<dbReference type="Proteomes" id="UP000001006">
    <property type="component" value="Chromosome"/>
</dbReference>
<dbReference type="Proteomes" id="UP000002673">
    <property type="component" value="Chromosome"/>
</dbReference>
<dbReference type="GO" id="GO:0009279">
    <property type="term" value="C:cell outer membrane"/>
    <property type="evidence" value="ECO:0007669"/>
    <property type="project" value="UniProtKB-SubCell"/>
</dbReference>
<dbReference type="GO" id="GO:0005509">
    <property type="term" value="F:calcium ion binding"/>
    <property type="evidence" value="ECO:0007669"/>
    <property type="project" value="TreeGrafter"/>
</dbReference>
<dbReference type="GO" id="GO:0008970">
    <property type="term" value="F:phospholipase A1 activity"/>
    <property type="evidence" value="ECO:0007669"/>
    <property type="project" value="UniProtKB-EC"/>
</dbReference>
<dbReference type="GO" id="GO:0004623">
    <property type="term" value="F:phospholipase A2 activity"/>
    <property type="evidence" value="ECO:0007669"/>
    <property type="project" value="UniProtKB-EC"/>
</dbReference>
<dbReference type="GO" id="GO:0016042">
    <property type="term" value="P:lipid catabolic process"/>
    <property type="evidence" value="ECO:0007669"/>
    <property type="project" value="UniProtKB-KW"/>
</dbReference>
<dbReference type="CDD" id="cd00541">
    <property type="entry name" value="OMPLA"/>
    <property type="match status" value="1"/>
</dbReference>
<dbReference type="FunFam" id="2.40.230.10:FF:000001">
    <property type="entry name" value="Phospholipase A(1)"/>
    <property type="match status" value="1"/>
</dbReference>
<dbReference type="Gene3D" id="2.40.230.10">
    <property type="entry name" value="Phospholipase A1"/>
    <property type="match status" value="1"/>
</dbReference>
<dbReference type="InterPro" id="IPR003187">
    <property type="entry name" value="PLipase_A1"/>
</dbReference>
<dbReference type="InterPro" id="IPR036541">
    <property type="entry name" value="PLipase_A1_sf"/>
</dbReference>
<dbReference type="NCBIfam" id="NF008031">
    <property type="entry name" value="PRK10763.1"/>
    <property type="match status" value="1"/>
</dbReference>
<dbReference type="PANTHER" id="PTHR40457">
    <property type="entry name" value="PHOSPHOLIPASE A1"/>
    <property type="match status" value="1"/>
</dbReference>
<dbReference type="PANTHER" id="PTHR40457:SF1">
    <property type="entry name" value="PHOSPHOLIPASE A1"/>
    <property type="match status" value="1"/>
</dbReference>
<dbReference type="Pfam" id="PF02253">
    <property type="entry name" value="PLA1"/>
    <property type="match status" value="1"/>
</dbReference>
<dbReference type="PRINTS" id="PR01486">
    <property type="entry name" value="PHPHLIPASEA1"/>
</dbReference>
<dbReference type="SUPFAM" id="SSF56931">
    <property type="entry name" value="Outer membrane phospholipase A (OMPLA)"/>
    <property type="match status" value="1"/>
</dbReference>
<protein>
    <recommendedName>
        <fullName>Phospholipase A1</fullName>
        <ecNumber>3.1.1.32</ecNumber>
        <ecNumber>3.1.1.4</ecNumber>
    </recommendedName>
    <alternativeName>
        <fullName>Detergent-resistant phospholipase A</fullName>
        <shortName>DR-phospholipase A</shortName>
    </alternativeName>
    <alternativeName>
        <fullName>Outer membrane phospholipase A</fullName>
        <shortName>OM PLA</shortName>
        <shortName>OMPLA</shortName>
    </alternativeName>
    <alternativeName>
        <fullName>Phosphatidylcholine 1-acylhydrolase</fullName>
    </alternativeName>
</protein>